<feature type="propeptide" id="PRO_0000000995" evidence="1">
    <location>
        <begin position="1"/>
        <end position="8"/>
    </location>
</feature>
<feature type="chain" id="PRO_0000000996" description="Aegerolysin Aa-Pri1">
    <location>
        <begin position="9"/>
        <end position="145"/>
    </location>
</feature>
<accession>O42717</accession>
<sequence length="145" mass="16104">MDSNKDERAYAQWVIIILHNVGSSPFKIANLGLSWGKLYADGNKDKEVYPSDYNGKTVGPDEKIQINSCGRENASSGTEGSFDIVDPNDGNKTIRHFYWECPWGSKRNTWTPSGSNTKWMVEWSGQNLDSGALGTITVDVLRKGN</sequence>
<name>AAPR1_CYCAE</name>
<proteinExistence type="evidence at transcript level"/>
<gene>
    <name type="primary">AA-PRI1</name>
</gene>
<reference key="1">
    <citation type="journal article" date="1997" name="Curr. Genet.">
        <title>Cloning and sequencing of the Aa-Pri1 gene specifically expressed during fruiting initiation in the edible mushroom Agrocybe aegerita, and analysis of the predicted amino-acid sequence.</title>
        <authorList>
            <person name="Fernandez-Espinar M.-T."/>
            <person name="Labarere J."/>
        </authorList>
    </citation>
    <scope>NUCLEOTIDE SEQUENCE [GENOMIC DNA]</scope>
    <scope>DEVELOPMENTAL STAGE</scope>
    <source>
        <strain>SM 51</strain>
        <tissue>Mycelium</tissue>
    </source>
</reference>
<dbReference type="EMBL" id="AF004297">
    <property type="protein sequence ID" value="AAC02265.1"/>
    <property type="molecule type" value="Genomic_DNA"/>
</dbReference>
<dbReference type="SMR" id="O42717"/>
<dbReference type="TCDB" id="1.C.119.1.1">
    <property type="family name" value="the aegerolysin (aegerolysin) family"/>
</dbReference>
<dbReference type="GO" id="GO:0019836">
    <property type="term" value="P:symbiont-mediated hemolysis of host erythrocyte"/>
    <property type="evidence" value="ECO:0007669"/>
    <property type="project" value="InterPro"/>
</dbReference>
<dbReference type="Gene3D" id="2.60.270.50">
    <property type="match status" value="1"/>
</dbReference>
<dbReference type="InterPro" id="IPR009413">
    <property type="entry name" value="Aegerolysin-typ"/>
</dbReference>
<dbReference type="Pfam" id="PF06355">
    <property type="entry name" value="Aegerolysin"/>
    <property type="match status" value="1"/>
</dbReference>
<dbReference type="PIRSF" id="PIRSF007951">
    <property type="entry name" value="Hemolysin, aegerolysin type"/>
    <property type="match status" value="1"/>
</dbReference>
<organism>
    <name type="scientific">Cyclocybe aegerita</name>
    <name type="common">Black poplar mushroom</name>
    <name type="synonym">Agrocybe aegerita</name>
    <dbReference type="NCBI Taxonomy" id="1973307"/>
    <lineage>
        <taxon>Eukaryota</taxon>
        <taxon>Fungi</taxon>
        <taxon>Dikarya</taxon>
        <taxon>Basidiomycota</taxon>
        <taxon>Agaricomycotina</taxon>
        <taxon>Agaricomycetes</taxon>
        <taxon>Agaricomycetidae</taxon>
        <taxon>Agaricales</taxon>
        <taxon>Agaricineae</taxon>
        <taxon>Bolbitiaceae</taxon>
        <taxon>Cyclocybe</taxon>
    </lineage>
</organism>
<protein>
    <recommendedName>
        <fullName>Aegerolysin Aa-Pri1</fullName>
    </recommendedName>
</protein>
<comment type="developmental stage">
    <text evidence="2">Expressed during fruiting initiation in primordia and immature fruiting bodies.</text>
</comment>
<comment type="similarity">
    <text evidence="3">Belongs to the aegerolysin family.</text>
</comment>
<evidence type="ECO:0000250" key="1"/>
<evidence type="ECO:0000269" key="2">
    <source>
    </source>
</evidence>
<evidence type="ECO:0000305" key="3"/>
<keyword id="KW-0204">Cytolysis</keyword>
<keyword id="KW-0354">Hemolysis</keyword>